<protein>
    <recommendedName>
        <fullName evidence="1">Amino-acid acetyltransferase</fullName>
        <ecNumber evidence="1">2.3.1.1</ecNumber>
    </recommendedName>
    <alternativeName>
        <fullName evidence="1">N-acetylglutamate synthase</fullName>
        <shortName evidence="1">AGS</shortName>
        <shortName evidence="1">NAGS</shortName>
    </alternativeName>
</protein>
<accession>B7LW98</accession>
<proteinExistence type="inferred from homology"/>
<feature type="chain" id="PRO_1000137050" description="Amino-acid acetyltransferase">
    <location>
        <begin position="1"/>
        <end position="443"/>
    </location>
</feature>
<feature type="domain" description="N-acetyltransferase" evidence="1">
    <location>
        <begin position="296"/>
        <end position="434"/>
    </location>
</feature>
<dbReference type="EC" id="2.3.1.1" evidence="1"/>
<dbReference type="EMBL" id="CU928158">
    <property type="protein sequence ID" value="CAQ87821.1"/>
    <property type="molecule type" value="Genomic_DNA"/>
</dbReference>
<dbReference type="RefSeq" id="WP_000238002.1">
    <property type="nucleotide sequence ID" value="NC_011740.1"/>
</dbReference>
<dbReference type="SMR" id="B7LW98"/>
<dbReference type="GeneID" id="75058668"/>
<dbReference type="KEGG" id="efe:EFER_0252"/>
<dbReference type="HOGENOM" id="CLU_024773_0_0_6"/>
<dbReference type="OrthoDB" id="9802238at2"/>
<dbReference type="UniPathway" id="UPA00068">
    <property type="reaction ID" value="UER00106"/>
</dbReference>
<dbReference type="Proteomes" id="UP000000745">
    <property type="component" value="Chromosome"/>
</dbReference>
<dbReference type="GO" id="GO:0005737">
    <property type="term" value="C:cytoplasm"/>
    <property type="evidence" value="ECO:0007669"/>
    <property type="project" value="UniProtKB-SubCell"/>
</dbReference>
<dbReference type="GO" id="GO:0004042">
    <property type="term" value="F:L-glutamate N-acetyltransferase activity"/>
    <property type="evidence" value="ECO:0007669"/>
    <property type="project" value="UniProtKB-UniRule"/>
</dbReference>
<dbReference type="GO" id="GO:0006526">
    <property type="term" value="P:L-arginine biosynthetic process"/>
    <property type="evidence" value="ECO:0007669"/>
    <property type="project" value="UniProtKB-UniRule"/>
</dbReference>
<dbReference type="CDD" id="cd04237">
    <property type="entry name" value="AAK_NAGS-ABP"/>
    <property type="match status" value="1"/>
</dbReference>
<dbReference type="CDD" id="cd04301">
    <property type="entry name" value="NAT_SF"/>
    <property type="match status" value="1"/>
</dbReference>
<dbReference type="FunFam" id="3.40.1160.10:FF:000005">
    <property type="entry name" value="Amino-acid acetyltransferase"/>
    <property type="match status" value="1"/>
</dbReference>
<dbReference type="FunFam" id="3.40.630.30:FF:000009">
    <property type="entry name" value="Amino-acid acetyltransferase"/>
    <property type="match status" value="1"/>
</dbReference>
<dbReference type="Gene3D" id="3.40.630.30">
    <property type="match status" value="1"/>
</dbReference>
<dbReference type="Gene3D" id="3.40.1160.10">
    <property type="entry name" value="Acetylglutamate kinase-like"/>
    <property type="match status" value="1"/>
</dbReference>
<dbReference type="HAMAP" id="MF_01105">
    <property type="entry name" value="N_acetyl_glu_synth"/>
    <property type="match status" value="1"/>
</dbReference>
<dbReference type="InterPro" id="IPR036393">
    <property type="entry name" value="AceGlu_kinase-like_sf"/>
</dbReference>
<dbReference type="InterPro" id="IPR016181">
    <property type="entry name" value="Acyl_CoA_acyltransferase"/>
</dbReference>
<dbReference type="InterPro" id="IPR001048">
    <property type="entry name" value="Asp/Glu/Uridylate_kinase"/>
</dbReference>
<dbReference type="InterPro" id="IPR000182">
    <property type="entry name" value="GNAT_dom"/>
</dbReference>
<dbReference type="InterPro" id="IPR033719">
    <property type="entry name" value="NAGS_kin"/>
</dbReference>
<dbReference type="InterPro" id="IPR010167">
    <property type="entry name" value="NH2A_AcTrfase"/>
</dbReference>
<dbReference type="NCBIfam" id="TIGR01890">
    <property type="entry name" value="N-Ac-Glu-synth"/>
    <property type="match status" value="1"/>
</dbReference>
<dbReference type="NCBIfam" id="NF003641">
    <property type="entry name" value="PRK05279.1"/>
    <property type="match status" value="1"/>
</dbReference>
<dbReference type="PANTHER" id="PTHR30602">
    <property type="entry name" value="AMINO-ACID ACETYLTRANSFERASE"/>
    <property type="match status" value="1"/>
</dbReference>
<dbReference type="PANTHER" id="PTHR30602:SF12">
    <property type="entry name" value="AMINO-ACID ACETYLTRANSFERASE NAGS1, CHLOROPLASTIC-RELATED"/>
    <property type="match status" value="1"/>
</dbReference>
<dbReference type="Pfam" id="PF00696">
    <property type="entry name" value="AA_kinase"/>
    <property type="match status" value="1"/>
</dbReference>
<dbReference type="Pfam" id="PF00583">
    <property type="entry name" value="Acetyltransf_1"/>
    <property type="match status" value="1"/>
</dbReference>
<dbReference type="PIRSF" id="PIRSF000423">
    <property type="entry name" value="ArgA"/>
    <property type="match status" value="1"/>
</dbReference>
<dbReference type="SUPFAM" id="SSF55729">
    <property type="entry name" value="Acyl-CoA N-acyltransferases (Nat)"/>
    <property type="match status" value="1"/>
</dbReference>
<dbReference type="SUPFAM" id="SSF53633">
    <property type="entry name" value="Carbamate kinase-like"/>
    <property type="match status" value="1"/>
</dbReference>
<dbReference type="PROSITE" id="PS51186">
    <property type="entry name" value="GNAT"/>
    <property type="match status" value="1"/>
</dbReference>
<evidence type="ECO:0000255" key="1">
    <source>
        <dbReference type="HAMAP-Rule" id="MF_01105"/>
    </source>
</evidence>
<organism>
    <name type="scientific">Escherichia fergusonii (strain ATCC 35469 / DSM 13698 / CCUG 18766 / IAM 14443 / JCM 21226 / LMG 7866 / NBRC 102419 / NCTC 12128 / CDC 0568-73)</name>
    <dbReference type="NCBI Taxonomy" id="585054"/>
    <lineage>
        <taxon>Bacteria</taxon>
        <taxon>Pseudomonadati</taxon>
        <taxon>Pseudomonadota</taxon>
        <taxon>Gammaproteobacteria</taxon>
        <taxon>Enterobacterales</taxon>
        <taxon>Enterobacteriaceae</taxon>
        <taxon>Escherichia</taxon>
    </lineage>
</organism>
<reference key="1">
    <citation type="journal article" date="2009" name="PLoS Genet.">
        <title>Organised genome dynamics in the Escherichia coli species results in highly diverse adaptive paths.</title>
        <authorList>
            <person name="Touchon M."/>
            <person name="Hoede C."/>
            <person name="Tenaillon O."/>
            <person name="Barbe V."/>
            <person name="Baeriswyl S."/>
            <person name="Bidet P."/>
            <person name="Bingen E."/>
            <person name="Bonacorsi S."/>
            <person name="Bouchier C."/>
            <person name="Bouvet O."/>
            <person name="Calteau A."/>
            <person name="Chiapello H."/>
            <person name="Clermont O."/>
            <person name="Cruveiller S."/>
            <person name="Danchin A."/>
            <person name="Diard M."/>
            <person name="Dossat C."/>
            <person name="Karoui M.E."/>
            <person name="Frapy E."/>
            <person name="Garry L."/>
            <person name="Ghigo J.M."/>
            <person name="Gilles A.M."/>
            <person name="Johnson J."/>
            <person name="Le Bouguenec C."/>
            <person name="Lescat M."/>
            <person name="Mangenot S."/>
            <person name="Martinez-Jehanne V."/>
            <person name="Matic I."/>
            <person name="Nassif X."/>
            <person name="Oztas S."/>
            <person name="Petit M.A."/>
            <person name="Pichon C."/>
            <person name="Rouy Z."/>
            <person name="Ruf C.S."/>
            <person name="Schneider D."/>
            <person name="Tourret J."/>
            <person name="Vacherie B."/>
            <person name="Vallenet D."/>
            <person name="Medigue C."/>
            <person name="Rocha E.P.C."/>
            <person name="Denamur E."/>
        </authorList>
    </citation>
    <scope>NUCLEOTIDE SEQUENCE [LARGE SCALE GENOMIC DNA]</scope>
    <source>
        <strain>ATCC 35469 / DSM 13698 / BCRC 15582 / CCUG 18766 / IAM 14443 / JCM 21226 / LMG 7866 / NBRC 102419 / NCTC 12128 / CDC 0568-73</strain>
    </source>
</reference>
<comment type="catalytic activity">
    <reaction evidence="1">
        <text>L-glutamate + acetyl-CoA = N-acetyl-L-glutamate + CoA + H(+)</text>
        <dbReference type="Rhea" id="RHEA:24292"/>
        <dbReference type="ChEBI" id="CHEBI:15378"/>
        <dbReference type="ChEBI" id="CHEBI:29985"/>
        <dbReference type="ChEBI" id="CHEBI:44337"/>
        <dbReference type="ChEBI" id="CHEBI:57287"/>
        <dbReference type="ChEBI" id="CHEBI:57288"/>
        <dbReference type="EC" id="2.3.1.1"/>
    </reaction>
</comment>
<comment type="pathway">
    <text evidence="1">Amino-acid biosynthesis; L-arginine biosynthesis; N(2)-acetyl-L-ornithine from L-glutamate: step 1/4.</text>
</comment>
<comment type="subunit">
    <text evidence="1">Homohexamer.</text>
</comment>
<comment type="subcellular location">
    <subcellularLocation>
        <location evidence="1">Cytoplasm</location>
    </subcellularLocation>
</comment>
<comment type="similarity">
    <text evidence="1">Belongs to the acetyltransferase family. ArgA subfamily.</text>
</comment>
<name>ARGA_ESCF3</name>
<sequence>MVKERSTELVQGFRHSVPYINTHRGKTFVIMLGGEAIEHENFSSIVNDIGLLHSLGIRLVVVYGARPQIDANLAAHQHEPLYHKNIRVTDAKTLELVKQAAGTLQLDITARLSMSLNNTPLQGAHINVVSGNFIIAQPLGVDDGVDYCHSGRIRRIDEEAIHRQLDSGAIVLLGPVAVSVTGESFNLTSEEIATQLAIKLKAEKMIGFCSSQGVTNDDGDIVSELFPNEAQARVEAQETAGDYNSGTVRFLRGAVKACRSGVRRCHLISYQEDGALLQELFSRDGIGTQIVMESAEQIRRATINDIGGILELIRPLEQQGILVRRSREQLEMEIDKFTIIQRDNTTIACAALYPFPEEKIGEMACVAVHPDYRSSARGEVLLERIAAQAKQIGLSKLFVLTTRSIHWFQERGFTPVDIDLLPESKKLMYNYQRRSKVLMADLG</sequence>
<gene>
    <name evidence="1" type="primary">argA</name>
    <name type="ordered locus">EFER_0252</name>
</gene>
<keyword id="KW-0012">Acyltransferase</keyword>
<keyword id="KW-0028">Amino-acid biosynthesis</keyword>
<keyword id="KW-0055">Arginine biosynthesis</keyword>
<keyword id="KW-0963">Cytoplasm</keyword>
<keyword id="KW-0808">Transferase</keyword>